<comment type="function">
    <text evidence="1">Involved in the biosynthesis of lipid A, a phosphorylated glycolipid that anchors the lipopolysaccharide to the outer membrane of the cell.</text>
</comment>
<comment type="catalytic activity">
    <reaction evidence="1">
        <text>a (3R)-hydroxyacyl-[ACP] + UDP-N-acetyl-alpha-D-glucosamine = a UDP-3-O-[(3R)-3-hydroxyacyl]-N-acetyl-alpha-D-glucosamine + holo-[ACP]</text>
        <dbReference type="Rhea" id="RHEA:67812"/>
        <dbReference type="Rhea" id="RHEA-COMP:9685"/>
        <dbReference type="Rhea" id="RHEA-COMP:9945"/>
        <dbReference type="ChEBI" id="CHEBI:57705"/>
        <dbReference type="ChEBI" id="CHEBI:64479"/>
        <dbReference type="ChEBI" id="CHEBI:78827"/>
        <dbReference type="ChEBI" id="CHEBI:173225"/>
        <dbReference type="EC" id="2.3.1.129"/>
    </reaction>
</comment>
<comment type="pathway">
    <text evidence="1">Glycolipid biosynthesis; lipid IV(A) biosynthesis; lipid IV(A) from (3R)-3-hydroxytetradecanoyl-[acyl-carrier-protein] and UDP-N-acetyl-alpha-D-glucosamine: step 1/6.</text>
</comment>
<comment type="subunit">
    <text evidence="1">Homotrimer.</text>
</comment>
<comment type="subcellular location">
    <subcellularLocation>
        <location evidence="1">Cytoplasm</location>
    </subcellularLocation>
</comment>
<comment type="similarity">
    <text evidence="1">Belongs to the transferase hexapeptide repeat family. LpxA subfamily.</text>
</comment>
<sequence>MKETFIHPTALVEPGVELGQGVSVGPFCHVQSGAIIGNDCELMSHVVITGATTLGAGTKVYPHAILGCDPQNNKHKGGPTRLNVGVNCIIREGVTMHKGSDNARGYTSIGDNCSFLAYAHVAHDCDIGDYVTFSNNVMIGGHTSIGHHAILGGGAAVHQFVRVGHHAFIGGLAAVVSDLIPYGMAIGVHAHLGGLNIIGMKRSGMERKEIHNLRHAVRMLFDRTKPIRQRAQDVLAAIPDSPTVSDMISFINVDTKRAYCTPPLDAAHGGAGHDSDED</sequence>
<gene>
    <name evidence="1" type="primary">lpxA</name>
    <name type="ordered locus">BAbS19_I10910</name>
</gene>
<evidence type="ECO:0000255" key="1">
    <source>
        <dbReference type="HAMAP-Rule" id="MF_00387"/>
    </source>
</evidence>
<name>LPXA_BRUA1</name>
<protein>
    <recommendedName>
        <fullName evidence="1">Acyl-[acyl-carrier-protein]--UDP-N-acetylglucosamine O-acyltransferase</fullName>
        <shortName evidence="1">UDP-N-acetylglucosamine acyltransferase</shortName>
        <ecNumber evidence="1">2.3.1.129</ecNumber>
    </recommendedName>
</protein>
<keyword id="KW-0012">Acyltransferase</keyword>
<keyword id="KW-0963">Cytoplasm</keyword>
<keyword id="KW-0441">Lipid A biosynthesis</keyword>
<keyword id="KW-0444">Lipid biosynthesis</keyword>
<keyword id="KW-0443">Lipid metabolism</keyword>
<keyword id="KW-0677">Repeat</keyword>
<keyword id="KW-0808">Transferase</keyword>
<reference key="1">
    <citation type="journal article" date="2008" name="PLoS ONE">
        <title>Genome sequence of Brucella abortus vaccine strain S19 compared to virulent strains yields candidate virulence genes.</title>
        <authorList>
            <person name="Crasta O.R."/>
            <person name="Folkerts O."/>
            <person name="Fei Z."/>
            <person name="Mane S.P."/>
            <person name="Evans C."/>
            <person name="Martino-Catt S."/>
            <person name="Bricker B."/>
            <person name="Yu G."/>
            <person name="Du L."/>
            <person name="Sobral B.W."/>
        </authorList>
    </citation>
    <scope>NUCLEOTIDE SEQUENCE [LARGE SCALE GENOMIC DNA]</scope>
    <source>
        <strain>S19</strain>
    </source>
</reference>
<accession>B2S601</accession>
<feature type="chain" id="PRO_1000122686" description="Acyl-[acyl-carrier-protein]--UDP-N-acetylglucosamine O-acyltransferase">
    <location>
        <begin position="1"/>
        <end position="278"/>
    </location>
</feature>
<organism>
    <name type="scientific">Brucella abortus (strain S19)</name>
    <dbReference type="NCBI Taxonomy" id="430066"/>
    <lineage>
        <taxon>Bacteria</taxon>
        <taxon>Pseudomonadati</taxon>
        <taxon>Pseudomonadota</taxon>
        <taxon>Alphaproteobacteria</taxon>
        <taxon>Hyphomicrobiales</taxon>
        <taxon>Brucellaceae</taxon>
        <taxon>Brucella/Ochrobactrum group</taxon>
        <taxon>Brucella</taxon>
    </lineage>
</organism>
<proteinExistence type="inferred from homology"/>
<dbReference type="EC" id="2.3.1.129" evidence="1"/>
<dbReference type="EMBL" id="CP000887">
    <property type="protein sequence ID" value="ACD72598.1"/>
    <property type="molecule type" value="Genomic_DNA"/>
</dbReference>
<dbReference type="RefSeq" id="WP_002964279.1">
    <property type="nucleotide sequence ID" value="NC_010742.1"/>
</dbReference>
<dbReference type="SMR" id="B2S601"/>
<dbReference type="GeneID" id="97533598"/>
<dbReference type="KEGG" id="bmc:BAbS19_I10910"/>
<dbReference type="HOGENOM" id="CLU_061249_0_0_5"/>
<dbReference type="UniPathway" id="UPA00359">
    <property type="reaction ID" value="UER00477"/>
</dbReference>
<dbReference type="Proteomes" id="UP000002565">
    <property type="component" value="Chromosome 1"/>
</dbReference>
<dbReference type="GO" id="GO:0005737">
    <property type="term" value="C:cytoplasm"/>
    <property type="evidence" value="ECO:0007669"/>
    <property type="project" value="UniProtKB-SubCell"/>
</dbReference>
<dbReference type="GO" id="GO:0016020">
    <property type="term" value="C:membrane"/>
    <property type="evidence" value="ECO:0007669"/>
    <property type="project" value="GOC"/>
</dbReference>
<dbReference type="GO" id="GO:0008780">
    <property type="term" value="F:acyl-[acyl-carrier-protein]-UDP-N-acetylglucosamine O-acyltransferase activity"/>
    <property type="evidence" value="ECO:0007669"/>
    <property type="project" value="UniProtKB-UniRule"/>
</dbReference>
<dbReference type="GO" id="GO:0009245">
    <property type="term" value="P:lipid A biosynthetic process"/>
    <property type="evidence" value="ECO:0007669"/>
    <property type="project" value="UniProtKB-UniRule"/>
</dbReference>
<dbReference type="CDD" id="cd03351">
    <property type="entry name" value="LbH_UDP-GlcNAc_AT"/>
    <property type="match status" value="1"/>
</dbReference>
<dbReference type="Gene3D" id="2.160.10.10">
    <property type="entry name" value="Hexapeptide repeat proteins"/>
    <property type="match status" value="1"/>
</dbReference>
<dbReference type="Gene3D" id="1.20.1180.10">
    <property type="entry name" value="Udp N-acetylglucosamine O-acyltransferase, C-terminal domain"/>
    <property type="match status" value="1"/>
</dbReference>
<dbReference type="HAMAP" id="MF_00387">
    <property type="entry name" value="LpxA"/>
    <property type="match status" value="1"/>
</dbReference>
<dbReference type="InterPro" id="IPR029098">
    <property type="entry name" value="Acetyltransf_C"/>
</dbReference>
<dbReference type="InterPro" id="IPR037157">
    <property type="entry name" value="Acetyltransf_C_sf"/>
</dbReference>
<dbReference type="InterPro" id="IPR001451">
    <property type="entry name" value="Hexapep"/>
</dbReference>
<dbReference type="InterPro" id="IPR018357">
    <property type="entry name" value="Hexapep_transf_CS"/>
</dbReference>
<dbReference type="InterPro" id="IPR010137">
    <property type="entry name" value="Lipid_A_LpxA"/>
</dbReference>
<dbReference type="InterPro" id="IPR011004">
    <property type="entry name" value="Trimer_LpxA-like_sf"/>
</dbReference>
<dbReference type="NCBIfam" id="TIGR01852">
    <property type="entry name" value="lipid_A_lpxA"/>
    <property type="match status" value="1"/>
</dbReference>
<dbReference type="NCBIfam" id="NF003657">
    <property type="entry name" value="PRK05289.1"/>
    <property type="match status" value="1"/>
</dbReference>
<dbReference type="PANTHER" id="PTHR43480">
    <property type="entry name" value="ACYL-[ACYL-CARRIER-PROTEIN]--UDP-N-ACETYLGLUCOSAMINE O-ACYLTRANSFERASE"/>
    <property type="match status" value="1"/>
</dbReference>
<dbReference type="PANTHER" id="PTHR43480:SF1">
    <property type="entry name" value="ACYL-[ACYL-CARRIER-PROTEIN]--UDP-N-ACETYLGLUCOSAMINE O-ACYLTRANSFERASE, MITOCHONDRIAL-RELATED"/>
    <property type="match status" value="1"/>
</dbReference>
<dbReference type="Pfam" id="PF13720">
    <property type="entry name" value="Acetyltransf_11"/>
    <property type="match status" value="1"/>
</dbReference>
<dbReference type="Pfam" id="PF00132">
    <property type="entry name" value="Hexapep"/>
    <property type="match status" value="2"/>
</dbReference>
<dbReference type="PIRSF" id="PIRSF000456">
    <property type="entry name" value="UDP-GlcNAc_acltr"/>
    <property type="match status" value="1"/>
</dbReference>
<dbReference type="SUPFAM" id="SSF51161">
    <property type="entry name" value="Trimeric LpxA-like enzymes"/>
    <property type="match status" value="1"/>
</dbReference>
<dbReference type="PROSITE" id="PS00101">
    <property type="entry name" value="HEXAPEP_TRANSFERASES"/>
    <property type="match status" value="1"/>
</dbReference>